<proteinExistence type="inferred from homology"/>
<feature type="chain" id="PRO_0000150993" description="ORC1-type DNA replication protein 14">
    <location>
        <begin position="1"/>
        <end position="431"/>
    </location>
</feature>
<feature type="binding site" evidence="1">
    <location>
        <begin position="62"/>
        <end position="66"/>
    </location>
    <ligand>
        <name>ATP</name>
        <dbReference type="ChEBI" id="CHEBI:30616"/>
    </ligand>
</feature>
<feature type="binding site" evidence="1">
    <location>
        <position position="219"/>
    </location>
    <ligand>
        <name>ATP</name>
        <dbReference type="ChEBI" id="CHEBI:30616"/>
    </ligand>
</feature>
<feature type="binding site" evidence="1">
    <location>
        <position position="231"/>
    </location>
    <ligand>
        <name>ATP</name>
        <dbReference type="ChEBI" id="CHEBI:30616"/>
    </ligand>
</feature>
<protein>
    <recommendedName>
        <fullName evidence="1">ORC1-type DNA replication protein 14</fullName>
    </recommendedName>
</protein>
<keyword id="KW-0067">ATP-binding</keyword>
<keyword id="KW-0235">DNA replication</keyword>
<keyword id="KW-0547">Nucleotide-binding</keyword>
<keyword id="KW-0614">Plasmid</keyword>
<keyword id="KW-1185">Reference proteome</keyword>
<comment type="function">
    <text evidence="1">Involved in regulation of DNA replication.</text>
</comment>
<comment type="similarity">
    <text evidence="1">Belongs to the CDC6/cdc18 family.</text>
</comment>
<comment type="sequence caution" evidence="2">
    <conflict type="erroneous initiation">
        <sequence resource="EMBL-CDS" id="AAV44535"/>
    </conflict>
    <text>Extended N-terminus.</text>
</comment>
<name>CDC6N_HALMA</name>
<geneLocation type="plasmid">
    <name>pNG500</name>
</geneLocation>
<organism>
    <name type="scientific">Haloarcula marismortui (strain ATCC 43049 / DSM 3752 / JCM 8966 / VKM B-1809)</name>
    <name type="common">Halobacterium marismortui</name>
    <dbReference type="NCBI Taxonomy" id="272569"/>
    <lineage>
        <taxon>Archaea</taxon>
        <taxon>Methanobacteriati</taxon>
        <taxon>Methanobacteriota</taxon>
        <taxon>Stenosarchaea group</taxon>
        <taxon>Halobacteria</taxon>
        <taxon>Halobacteriales</taxon>
        <taxon>Haloarculaceae</taxon>
        <taxon>Haloarcula</taxon>
    </lineage>
</organism>
<sequence length="431" mass="48435">MIEQADEESVFRNRNLVEPDTIIDRDRIVGRDDQLRTVVSNLRKVLNENRPPNLLLYGPAGTGKSLIFDAVARQIRDISKNRGYEFGTLRINCQNLRSLDEAVYALVREAAHDLNEEIGVARHGVSTSTKYDRLYDLLDEGYDSVVFVLDEIDLLLGRRSSSSEPAYSDLIYQLSRASIESIDIQVSVAALTNDPEFMNNLDARAESSFNPRDIPFSDYDANQLQEILRNREDAFIQDALSEDVIPLTSAFAAQSHGDARKAIDLLRKAGDVANENGDLTVTENHVREAQEDVETDRSLKLVEGLTTQKKISLYATAAVAEFGKSGSTTASSRVAFPVYQFLTDVLDADGRTRETFNNYVREVGTYGQLDHERKSLGGKQGGGMYLMYEFKRDPGEIKKRLEQDERIADLSHHEDGLNRVIQAQKRNFAED</sequence>
<accession>Q5V7E8</accession>
<evidence type="ECO:0000255" key="1">
    <source>
        <dbReference type="HAMAP-Rule" id="MF_01407"/>
    </source>
</evidence>
<evidence type="ECO:0000305" key="2"/>
<gene>
    <name type="primary">cdc6n</name>
    <name type="ordered locus">pNG5122</name>
</gene>
<dbReference type="EMBL" id="AY596294">
    <property type="protein sequence ID" value="AAV44535.1"/>
    <property type="status" value="ALT_INIT"/>
    <property type="molecule type" value="Genomic_DNA"/>
</dbReference>
<dbReference type="RefSeq" id="WP_049938488.1">
    <property type="nucleotide sequence ID" value="NC_006393.1"/>
</dbReference>
<dbReference type="SMR" id="Q5V7E8"/>
<dbReference type="EnsemblBacteria" id="AAV44535">
    <property type="protein sequence ID" value="AAV44535"/>
    <property type="gene ID" value="pNG5122"/>
</dbReference>
<dbReference type="GeneID" id="40150801"/>
<dbReference type="KEGG" id="hma:pNG5122"/>
<dbReference type="PATRIC" id="fig|272569.17.peg.276"/>
<dbReference type="HOGENOM" id="CLU_025112_2_0_2"/>
<dbReference type="Proteomes" id="UP000001169">
    <property type="component" value="Plasmid pNG500"/>
</dbReference>
<dbReference type="GO" id="GO:0005524">
    <property type="term" value="F:ATP binding"/>
    <property type="evidence" value="ECO:0007669"/>
    <property type="project" value="UniProtKB-UniRule"/>
</dbReference>
<dbReference type="GO" id="GO:0016887">
    <property type="term" value="F:ATP hydrolysis activity"/>
    <property type="evidence" value="ECO:0007669"/>
    <property type="project" value="InterPro"/>
</dbReference>
<dbReference type="GO" id="GO:0006260">
    <property type="term" value="P:DNA replication"/>
    <property type="evidence" value="ECO:0007669"/>
    <property type="project" value="UniProtKB-UniRule"/>
</dbReference>
<dbReference type="CDD" id="cd08768">
    <property type="entry name" value="Cdc6_C"/>
    <property type="match status" value="1"/>
</dbReference>
<dbReference type="FunFam" id="1.10.8.60:FF:000073">
    <property type="entry name" value="ORC1-type DNA replication protein"/>
    <property type="match status" value="1"/>
</dbReference>
<dbReference type="Gene3D" id="1.10.8.60">
    <property type="match status" value="1"/>
</dbReference>
<dbReference type="Gene3D" id="3.40.50.300">
    <property type="entry name" value="P-loop containing nucleotide triphosphate hydrolases"/>
    <property type="match status" value="1"/>
</dbReference>
<dbReference type="Gene3D" id="1.10.10.10">
    <property type="entry name" value="Winged helix-like DNA-binding domain superfamily/Winged helix DNA-binding domain"/>
    <property type="match status" value="1"/>
</dbReference>
<dbReference type="HAMAP" id="MF_01407">
    <property type="entry name" value="ORC1_type_DNA_replic_protein"/>
    <property type="match status" value="1"/>
</dbReference>
<dbReference type="InterPro" id="IPR003593">
    <property type="entry name" value="AAA+_ATPase"/>
</dbReference>
<dbReference type="InterPro" id="IPR041664">
    <property type="entry name" value="AAA_16"/>
</dbReference>
<dbReference type="InterPro" id="IPR015163">
    <property type="entry name" value="Cdc6_C"/>
</dbReference>
<dbReference type="InterPro" id="IPR055237">
    <property type="entry name" value="Cdc6_lid"/>
</dbReference>
<dbReference type="InterPro" id="IPR050311">
    <property type="entry name" value="ORC1/CDC6"/>
</dbReference>
<dbReference type="InterPro" id="IPR014277">
    <property type="entry name" value="Orc1/Cdc6_arc"/>
</dbReference>
<dbReference type="InterPro" id="IPR027417">
    <property type="entry name" value="P-loop_NTPase"/>
</dbReference>
<dbReference type="InterPro" id="IPR036388">
    <property type="entry name" value="WH-like_DNA-bd_sf"/>
</dbReference>
<dbReference type="InterPro" id="IPR036390">
    <property type="entry name" value="WH_DNA-bd_sf"/>
</dbReference>
<dbReference type="NCBIfam" id="TIGR02928">
    <property type="entry name" value="orc1/cdc6 family replication initiation protein"/>
    <property type="match status" value="1"/>
</dbReference>
<dbReference type="PANTHER" id="PTHR10763">
    <property type="entry name" value="CELL DIVISION CONTROL PROTEIN 6-RELATED"/>
    <property type="match status" value="1"/>
</dbReference>
<dbReference type="PANTHER" id="PTHR10763:SF22">
    <property type="entry name" value="ORC1-TYPE DNA REPLICATION PROTEIN"/>
    <property type="match status" value="1"/>
</dbReference>
<dbReference type="Pfam" id="PF13191">
    <property type="entry name" value="AAA_16"/>
    <property type="match status" value="1"/>
</dbReference>
<dbReference type="Pfam" id="PF09079">
    <property type="entry name" value="Cdc6_C"/>
    <property type="match status" value="1"/>
</dbReference>
<dbReference type="Pfam" id="PF22703">
    <property type="entry name" value="Cdc6_lid"/>
    <property type="match status" value="1"/>
</dbReference>
<dbReference type="SMART" id="SM00382">
    <property type="entry name" value="AAA"/>
    <property type="match status" value="1"/>
</dbReference>
<dbReference type="SUPFAM" id="SSF52540">
    <property type="entry name" value="P-loop containing nucleoside triphosphate hydrolases"/>
    <property type="match status" value="1"/>
</dbReference>
<dbReference type="SUPFAM" id="SSF46785">
    <property type="entry name" value="Winged helix' DNA-binding domain"/>
    <property type="match status" value="1"/>
</dbReference>
<reference key="1">
    <citation type="journal article" date="2004" name="Genome Res.">
        <title>Genome sequence of Haloarcula marismortui: a halophilic archaeon from the Dead Sea.</title>
        <authorList>
            <person name="Baliga N.S."/>
            <person name="Bonneau R."/>
            <person name="Facciotti M.T."/>
            <person name="Pan M."/>
            <person name="Glusman G."/>
            <person name="Deutsch E.W."/>
            <person name="Shannon P."/>
            <person name="Chiu Y."/>
            <person name="Weng R.S."/>
            <person name="Gan R.R."/>
            <person name="Hung P."/>
            <person name="Date S.V."/>
            <person name="Marcotte E."/>
            <person name="Hood L."/>
            <person name="Ng W.V."/>
        </authorList>
    </citation>
    <scope>NUCLEOTIDE SEQUENCE [LARGE SCALE GENOMIC DNA]</scope>
    <source>
        <strain>ATCC 43049 / DSM 3752 / JCM 8966 / VKM B-1809</strain>
    </source>
</reference>